<evidence type="ECO:0000255" key="1">
    <source>
        <dbReference type="HAMAP-Rule" id="MF_00044"/>
    </source>
</evidence>
<keyword id="KW-0030">Aminoacyl-tRNA synthetase</keyword>
<keyword id="KW-0067">ATP-binding</keyword>
<keyword id="KW-0963">Cytoplasm</keyword>
<keyword id="KW-0436">Ligase</keyword>
<keyword id="KW-0547">Nucleotide-binding</keyword>
<keyword id="KW-0648">Protein biosynthesis</keyword>
<accession>C1ESU7</accession>
<feature type="chain" id="PRO_1000198956" description="Aspartate--tRNA(Asp/Asn) ligase">
    <location>
        <begin position="1"/>
        <end position="591"/>
    </location>
</feature>
<feature type="region of interest" description="Aspartate" evidence="1">
    <location>
        <begin position="200"/>
        <end position="203"/>
    </location>
</feature>
<feature type="binding site" evidence="1">
    <location>
        <position position="176"/>
    </location>
    <ligand>
        <name>L-aspartate</name>
        <dbReference type="ChEBI" id="CHEBI:29991"/>
    </ligand>
</feature>
<feature type="binding site" evidence="1">
    <location>
        <begin position="222"/>
        <end position="224"/>
    </location>
    <ligand>
        <name>ATP</name>
        <dbReference type="ChEBI" id="CHEBI:30616"/>
    </ligand>
</feature>
<feature type="binding site" evidence="1">
    <location>
        <position position="222"/>
    </location>
    <ligand>
        <name>L-aspartate</name>
        <dbReference type="ChEBI" id="CHEBI:29991"/>
    </ligand>
</feature>
<feature type="binding site" evidence="1">
    <location>
        <position position="231"/>
    </location>
    <ligand>
        <name>ATP</name>
        <dbReference type="ChEBI" id="CHEBI:30616"/>
    </ligand>
</feature>
<feature type="binding site" evidence="1">
    <location>
        <position position="450"/>
    </location>
    <ligand>
        <name>L-aspartate</name>
        <dbReference type="ChEBI" id="CHEBI:29991"/>
    </ligand>
</feature>
<feature type="binding site" evidence="1">
    <location>
        <position position="484"/>
    </location>
    <ligand>
        <name>ATP</name>
        <dbReference type="ChEBI" id="CHEBI:30616"/>
    </ligand>
</feature>
<feature type="binding site" evidence="1">
    <location>
        <position position="491"/>
    </location>
    <ligand>
        <name>L-aspartate</name>
        <dbReference type="ChEBI" id="CHEBI:29991"/>
    </ligand>
</feature>
<feature type="binding site" evidence="1">
    <location>
        <begin position="536"/>
        <end position="539"/>
    </location>
    <ligand>
        <name>ATP</name>
        <dbReference type="ChEBI" id="CHEBI:30616"/>
    </ligand>
</feature>
<feature type="site" description="Important for tRNA non-discrimination" evidence="1">
    <location>
        <position position="84"/>
    </location>
</feature>
<gene>
    <name evidence="1" type="primary">aspS</name>
    <name type="ordered locus">BCA_4514</name>
</gene>
<proteinExistence type="inferred from homology"/>
<protein>
    <recommendedName>
        <fullName evidence="1">Aspartate--tRNA(Asp/Asn) ligase</fullName>
        <ecNumber evidence="1">6.1.1.23</ecNumber>
    </recommendedName>
    <alternativeName>
        <fullName evidence="1">Aspartyl-tRNA synthetase</fullName>
        <shortName evidence="1">AspRS</shortName>
    </alternativeName>
    <alternativeName>
        <fullName evidence="1">Non-discriminating aspartyl-tRNA synthetase</fullName>
        <shortName evidence="1">ND-AspRS</shortName>
    </alternativeName>
</protein>
<name>SYDND_BACC3</name>
<reference key="1">
    <citation type="submission" date="2009-02" db="EMBL/GenBank/DDBJ databases">
        <title>Genome sequence of Bacillus cereus 03BB102.</title>
        <authorList>
            <person name="Dodson R.J."/>
            <person name="Jackson P."/>
            <person name="Munk A.C."/>
            <person name="Brettin T."/>
            <person name="Bruce D."/>
            <person name="Detter C."/>
            <person name="Tapia R."/>
            <person name="Han C."/>
            <person name="Sutton G."/>
            <person name="Sims D."/>
        </authorList>
    </citation>
    <scope>NUCLEOTIDE SEQUENCE [LARGE SCALE GENOMIC DNA]</scope>
    <source>
        <strain>03BB102</strain>
    </source>
</reference>
<sequence>MAERTHACGKVTVEAVGQTVQLKGWVQKRRDLGGLIFIDLRDRTGIVQVVFNPETSKEALEVAETIRSEYVLHVEGTVVERGEGAINDNMATGRIEVQATKVNVLNAAKTTPIIIADDTDASEDVRLKYRYLDLRRPVMFNTFKMRHDVTKTIRNFLDTEEFLEVETPILTKSTPEGARDYLVPSRVHDGEFYALPQSPQLFKQLLMVGGFERYYQVARCFRDEDLRADRQPEFTQIDIEASFLTQDEILDMMERMMTKVMKDAKGVEVSAPFPRMKYADAMARYGSDKPDTRFEMELTDLSEFAAGCGFKVFTSAVESGGQVKAINAKGAASKYSRKDIDALTEFVKVYGAKGLAWLKVEEDGLKGPIAKFFGEEDANVLMNTLEATAGDLLLFVADKKSVVADSLGALRLRLGKELELIDESKFNFLWVTDWPLLEYDEDADRYFAAHHPFTMPFREDVELLETAPEKARAQAYDLVLNGYELGGGSLRIYERDVQEKMFKALGFSQEEAQEQFGFLLEAFEYGTPPHGGIALGLDRLVMLLAGRTNLRDTIAFPKTASASCLLTEAPSPVAEAQLEELNLKLNVKEEK</sequence>
<dbReference type="EC" id="6.1.1.23" evidence="1"/>
<dbReference type="EMBL" id="CP001407">
    <property type="protein sequence ID" value="ACO26931.1"/>
    <property type="molecule type" value="Genomic_DNA"/>
</dbReference>
<dbReference type="RefSeq" id="WP_000840895.1">
    <property type="nucleotide sequence ID" value="NZ_CP009318.1"/>
</dbReference>
<dbReference type="SMR" id="C1ESU7"/>
<dbReference type="KEGG" id="bcx:BCA_4514"/>
<dbReference type="PATRIC" id="fig|572264.18.peg.4463"/>
<dbReference type="Proteomes" id="UP000002210">
    <property type="component" value="Chromosome"/>
</dbReference>
<dbReference type="GO" id="GO:0005737">
    <property type="term" value="C:cytoplasm"/>
    <property type="evidence" value="ECO:0007669"/>
    <property type="project" value="UniProtKB-SubCell"/>
</dbReference>
<dbReference type="GO" id="GO:0004815">
    <property type="term" value="F:aspartate-tRNA ligase activity"/>
    <property type="evidence" value="ECO:0007669"/>
    <property type="project" value="UniProtKB-UniRule"/>
</dbReference>
<dbReference type="GO" id="GO:0050560">
    <property type="term" value="F:aspartate-tRNA(Asn) ligase activity"/>
    <property type="evidence" value="ECO:0007669"/>
    <property type="project" value="UniProtKB-EC"/>
</dbReference>
<dbReference type="GO" id="GO:0005524">
    <property type="term" value="F:ATP binding"/>
    <property type="evidence" value="ECO:0007669"/>
    <property type="project" value="UniProtKB-UniRule"/>
</dbReference>
<dbReference type="GO" id="GO:0140096">
    <property type="term" value="F:catalytic activity, acting on a protein"/>
    <property type="evidence" value="ECO:0007669"/>
    <property type="project" value="UniProtKB-ARBA"/>
</dbReference>
<dbReference type="GO" id="GO:0003676">
    <property type="term" value="F:nucleic acid binding"/>
    <property type="evidence" value="ECO:0007669"/>
    <property type="project" value="InterPro"/>
</dbReference>
<dbReference type="GO" id="GO:0016740">
    <property type="term" value="F:transferase activity"/>
    <property type="evidence" value="ECO:0007669"/>
    <property type="project" value="UniProtKB-ARBA"/>
</dbReference>
<dbReference type="GO" id="GO:0006422">
    <property type="term" value="P:aspartyl-tRNA aminoacylation"/>
    <property type="evidence" value="ECO:0007669"/>
    <property type="project" value="UniProtKB-UniRule"/>
</dbReference>
<dbReference type="CDD" id="cd00777">
    <property type="entry name" value="AspRS_core"/>
    <property type="match status" value="1"/>
</dbReference>
<dbReference type="CDD" id="cd04317">
    <property type="entry name" value="EcAspRS_like_N"/>
    <property type="match status" value="1"/>
</dbReference>
<dbReference type="Gene3D" id="3.30.930.10">
    <property type="entry name" value="Bira Bifunctional Protein, Domain 2"/>
    <property type="match status" value="1"/>
</dbReference>
<dbReference type="Gene3D" id="3.30.1360.30">
    <property type="entry name" value="GAD-like domain"/>
    <property type="match status" value="1"/>
</dbReference>
<dbReference type="Gene3D" id="2.40.50.140">
    <property type="entry name" value="Nucleic acid-binding proteins"/>
    <property type="match status" value="1"/>
</dbReference>
<dbReference type="HAMAP" id="MF_00044">
    <property type="entry name" value="Asp_tRNA_synth_type1"/>
    <property type="match status" value="1"/>
</dbReference>
<dbReference type="InterPro" id="IPR004364">
    <property type="entry name" value="Aa-tRNA-synt_II"/>
</dbReference>
<dbReference type="InterPro" id="IPR006195">
    <property type="entry name" value="aa-tRNA-synth_II"/>
</dbReference>
<dbReference type="InterPro" id="IPR045864">
    <property type="entry name" value="aa-tRNA-synth_II/BPL/LPL"/>
</dbReference>
<dbReference type="InterPro" id="IPR004524">
    <property type="entry name" value="Asp-tRNA-ligase_1"/>
</dbReference>
<dbReference type="InterPro" id="IPR047089">
    <property type="entry name" value="Asp-tRNA-ligase_1_N"/>
</dbReference>
<dbReference type="InterPro" id="IPR002312">
    <property type="entry name" value="Asp/Asn-tRNA-synth_IIb"/>
</dbReference>
<dbReference type="InterPro" id="IPR047090">
    <property type="entry name" value="AspRS_core"/>
</dbReference>
<dbReference type="InterPro" id="IPR004115">
    <property type="entry name" value="GAD-like_sf"/>
</dbReference>
<dbReference type="InterPro" id="IPR029351">
    <property type="entry name" value="GAD_dom"/>
</dbReference>
<dbReference type="InterPro" id="IPR012340">
    <property type="entry name" value="NA-bd_OB-fold"/>
</dbReference>
<dbReference type="InterPro" id="IPR004365">
    <property type="entry name" value="NA-bd_OB_tRNA"/>
</dbReference>
<dbReference type="NCBIfam" id="TIGR00459">
    <property type="entry name" value="aspS_bact"/>
    <property type="match status" value="1"/>
</dbReference>
<dbReference type="NCBIfam" id="NF001750">
    <property type="entry name" value="PRK00476.1"/>
    <property type="match status" value="1"/>
</dbReference>
<dbReference type="PANTHER" id="PTHR22594:SF5">
    <property type="entry name" value="ASPARTATE--TRNA LIGASE, MITOCHONDRIAL"/>
    <property type="match status" value="1"/>
</dbReference>
<dbReference type="PANTHER" id="PTHR22594">
    <property type="entry name" value="ASPARTYL/LYSYL-TRNA SYNTHETASE"/>
    <property type="match status" value="1"/>
</dbReference>
<dbReference type="Pfam" id="PF02938">
    <property type="entry name" value="GAD"/>
    <property type="match status" value="1"/>
</dbReference>
<dbReference type="Pfam" id="PF00152">
    <property type="entry name" value="tRNA-synt_2"/>
    <property type="match status" value="1"/>
</dbReference>
<dbReference type="Pfam" id="PF01336">
    <property type="entry name" value="tRNA_anti-codon"/>
    <property type="match status" value="1"/>
</dbReference>
<dbReference type="PRINTS" id="PR01042">
    <property type="entry name" value="TRNASYNTHASP"/>
</dbReference>
<dbReference type="SUPFAM" id="SSF55681">
    <property type="entry name" value="Class II aaRS and biotin synthetases"/>
    <property type="match status" value="1"/>
</dbReference>
<dbReference type="SUPFAM" id="SSF55261">
    <property type="entry name" value="GAD domain-like"/>
    <property type="match status" value="1"/>
</dbReference>
<dbReference type="SUPFAM" id="SSF50249">
    <property type="entry name" value="Nucleic acid-binding proteins"/>
    <property type="match status" value="1"/>
</dbReference>
<dbReference type="PROSITE" id="PS50862">
    <property type="entry name" value="AA_TRNA_LIGASE_II"/>
    <property type="match status" value="1"/>
</dbReference>
<organism>
    <name type="scientific">Bacillus cereus (strain 03BB102)</name>
    <dbReference type="NCBI Taxonomy" id="572264"/>
    <lineage>
        <taxon>Bacteria</taxon>
        <taxon>Bacillati</taxon>
        <taxon>Bacillota</taxon>
        <taxon>Bacilli</taxon>
        <taxon>Bacillales</taxon>
        <taxon>Bacillaceae</taxon>
        <taxon>Bacillus</taxon>
        <taxon>Bacillus cereus group</taxon>
    </lineage>
</organism>
<comment type="function">
    <text evidence="1">Aspartyl-tRNA synthetase with relaxed tRNA specificity since it is able to aspartylate not only its cognate tRNA(Asp) but also tRNA(Asn). Reaction proceeds in two steps: L-aspartate is first activated by ATP to form Asp-AMP and then transferred to the acceptor end of tRNA(Asp/Asn).</text>
</comment>
<comment type="catalytic activity">
    <reaction evidence="1">
        <text>tRNA(Asx) + L-aspartate + ATP = L-aspartyl-tRNA(Asx) + AMP + diphosphate</text>
        <dbReference type="Rhea" id="RHEA:18349"/>
        <dbReference type="Rhea" id="RHEA-COMP:9710"/>
        <dbReference type="Rhea" id="RHEA-COMP:9711"/>
        <dbReference type="ChEBI" id="CHEBI:29991"/>
        <dbReference type="ChEBI" id="CHEBI:30616"/>
        <dbReference type="ChEBI" id="CHEBI:33019"/>
        <dbReference type="ChEBI" id="CHEBI:78442"/>
        <dbReference type="ChEBI" id="CHEBI:78516"/>
        <dbReference type="ChEBI" id="CHEBI:456215"/>
        <dbReference type="EC" id="6.1.1.23"/>
    </reaction>
</comment>
<comment type="subunit">
    <text evidence="1">Homodimer.</text>
</comment>
<comment type="subcellular location">
    <subcellularLocation>
        <location evidence="1">Cytoplasm</location>
    </subcellularLocation>
</comment>
<comment type="similarity">
    <text evidence="1">Belongs to the class-II aminoacyl-tRNA synthetase family. Type 1 subfamily.</text>
</comment>